<gene>
    <name evidence="1" type="primary">csrA</name>
    <name type="ordered locus">Dde_3150</name>
</gene>
<dbReference type="EMBL" id="CP000112">
    <property type="protein sequence ID" value="ABB39944.1"/>
    <property type="molecule type" value="Genomic_DNA"/>
</dbReference>
<dbReference type="RefSeq" id="WP_011368898.1">
    <property type="nucleotide sequence ID" value="NC_007519.1"/>
</dbReference>
<dbReference type="SMR" id="Q30WK2"/>
<dbReference type="STRING" id="207559.Dde_3150"/>
<dbReference type="KEGG" id="dde:Dde_3150"/>
<dbReference type="eggNOG" id="COG1551">
    <property type="taxonomic scope" value="Bacteria"/>
</dbReference>
<dbReference type="HOGENOM" id="CLU_164837_0_2_7"/>
<dbReference type="Proteomes" id="UP000002710">
    <property type="component" value="Chromosome"/>
</dbReference>
<dbReference type="GO" id="GO:0005829">
    <property type="term" value="C:cytosol"/>
    <property type="evidence" value="ECO:0007669"/>
    <property type="project" value="TreeGrafter"/>
</dbReference>
<dbReference type="GO" id="GO:0048027">
    <property type="term" value="F:mRNA 5'-UTR binding"/>
    <property type="evidence" value="ECO:0007669"/>
    <property type="project" value="UniProtKB-UniRule"/>
</dbReference>
<dbReference type="GO" id="GO:0044781">
    <property type="term" value="P:bacterial-type flagellum organization"/>
    <property type="evidence" value="ECO:0007669"/>
    <property type="project" value="UniProtKB-KW"/>
</dbReference>
<dbReference type="GO" id="GO:0006402">
    <property type="term" value="P:mRNA catabolic process"/>
    <property type="evidence" value="ECO:0007669"/>
    <property type="project" value="InterPro"/>
</dbReference>
<dbReference type="GO" id="GO:0045947">
    <property type="term" value="P:negative regulation of translational initiation"/>
    <property type="evidence" value="ECO:0007669"/>
    <property type="project" value="UniProtKB-UniRule"/>
</dbReference>
<dbReference type="GO" id="GO:1902208">
    <property type="term" value="P:regulation of bacterial-type flagellum assembly"/>
    <property type="evidence" value="ECO:0007669"/>
    <property type="project" value="UniProtKB-UniRule"/>
</dbReference>
<dbReference type="GO" id="GO:0006109">
    <property type="term" value="P:regulation of carbohydrate metabolic process"/>
    <property type="evidence" value="ECO:0007669"/>
    <property type="project" value="InterPro"/>
</dbReference>
<dbReference type="Gene3D" id="2.60.40.4380">
    <property type="entry name" value="Translational regulator CsrA"/>
    <property type="match status" value="1"/>
</dbReference>
<dbReference type="HAMAP" id="MF_00167">
    <property type="entry name" value="CsrA"/>
    <property type="match status" value="1"/>
</dbReference>
<dbReference type="InterPro" id="IPR003751">
    <property type="entry name" value="CsrA"/>
</dbReference>
<dbReference type="InterPro" id="IPR036107">
    <property type="entry name" value="CsrA_sf"/>
</dbReference>
<dbReference type="NCBIfam" id="TIGR00202">
    <property type="entry name" value="csrA"/>
    <property type="match status" value="1"/>
</dbReference>
<dbReference type="NCBIfam" id="NF002469">
    <property type="entry name" value="PRK01712.1"/>
    <property type="match status" value="1"/>
</dbReference>
<dbReference type="PANTHER" id="PTHR34984">
    <property type="entry name" value="CARBON STORAGE REGULATOR"/>
    <property type="match status" value="1"/>
</dbReference>
<dbReference type="PANTHER" id="PTHR34984:SF1">
    <property type="entry name" value="CARBON STORAGE REGULATOR"/>
    <property type="match status" value="1"/>
</dbReference>
<dbReference type="Pfam" id="PF02599">
    <property type="entry name" value="CsrA"/>
    <property type="match status" value="1"/>
</dbReference>
<dbReference type="SUPFAM" id="SSF117130">
    <property type="entry name" value="CsrA-like"/>
    <property type="match status" value="1"/>
</dbReference>
<protein>
    <recommendedName>
        <fullName evidence="1">Translational regulator CsrA</fullName>
    </recommendedName>
</protein>
<reference key="1">
    <citation type="journal article" date="2011" name="J. Bacteriol.">
        <title>Complete genome sequence and updated annotation of Desulfovibrio alaskensis G20.</title>
        <authorList>
            <person name="Hauser L.J."/>
            <person name="Land M.L."/>
            <person name="Brown S.D."/>
            <person name="Larimer F."/>
            <person name="Keller K.L."/>
            <person name="Rapp-Giles B.J."/>
            <person name="Price M.N."/>
            <person name="Lin M."/>
            <person name="Bruce D.C."/>
            <person name="Detter J.C."/>
            <person name="Tapia R."/>
            <person name="Han C.S."/>
            <person name="Goodwin L.A."/>
            <person name="Cheng J.F."/>
            <person name="Pitluck S."/>
            <person name="Copeland A."/>
            <person name="Lucas S."/>
            <person name="Nolan M."/>
            <person name="Lapidus A.L."/>
            <person name="Palumbo A.V."/>
            <person name="Wall J.D."/>
        </authorList>
    </citation>
    <scope>NUCLEOTIDE SEQUENCE [LARGE SCALE GENOMIC DNA]</scope>
    <source>
        <strain>ATCC BAA-1058 / DSM 17464 / G20</strain>
    </source>
</reference>
<comment type="function">
    <text evidence="1">A translational regulator that binds mRNA to regulate translation initiation and/or mRNA stability. Usually binds in the 5'-UTR at or near the Shine-Dalgarno sequence preventing ribosome-binding, thus repressing translation. Its main target seems to be the major flagellin gene, while its function is anatagonized by FliW.</text>
</comment>
<comment type="subunit">
    <text evidence="1">Homodimer; the beta-strands of each monomer intercalate to form a hydrophobic core, while the alpha-helices form wings that extend away from the core.</text>
</comment>
<comment type="subcellular location">
    <subcellularLocation>
        <location evidence="1">Cytoplasm</location>
    </subcellularLocation>
</comment>
<comment type="similarity">
    <text evidence="1">Belongs to the CsrA/RsmA family.</text>
</comment>
<sequence length="78" mass="8887">MLILTRRPGESLYLGDTIKITVLSVQGKQIKIGLDVPGDMTVYREEVYMRVRDQNRQALETSDADLLAATQLWHAKKK</sequence>
<keyword id="KW-1005">Bacterial flagellum biogenesis</keyword>
<keyword id="KW-0963">Cytoplasm</keyword>
<keyword id="KW-1185">Reference proteome</keyword>
<keyword id="KW-0678">Repressor</keyword>
<keyword id="KW-0694">RNA-binding</keyword>
<keyword id="KW-0810">Translation regulation</keyword>
<proteinExistence type="inferred from homology"/>
<accession>Q30WK2</accession>
<organism>
    <name type="scientific">Oleidesulfovibrio alaskensis (strain ATCC BAA-1058 / DSM 17464 / G20)</name>
    <name type="common">Desulfovibrio alaskensis</name>
    <dbReference type="NCBI Taxonomy" id="207559"/>
    <lineage>
        <taxon>Bacteria</taxon>
        <taxon>Pseudomonadati</taxon>
        <taxon>Thermodesulfobacteriota</taxon>
        <taxon>Desulfovibrionia</taxon>
        <taxon>Desulfovibrionales</taxon>
        <taxon>Desulfovibrionaceae</taxon>
        <taxon>Oleidesulfovibrio</taxon>
    </lineage>
</organism>
<evidence type="ECO:0000255" key="1">
    <source>
        <dbReference type="HAMAP-Rule" id="MF_00167"/>
    </source>
</evidence>
<name>CSRA_OLEA2</name>
<feature type="chain" id="PRO_1000023376" description="Translational regulator CsrA">
    <location>
        <begin position="1"/>
        <end position="78"/>
    </location>
</feature>